<dbReference type="EMBL" id="BT030727">
    <property type="protein sequence ID" value="ABS45043.1"/>
    <property type="molecule type" value="mRNA"/>
</dbReference>
<dbReference type="EMBL" id="BC114648">
    <property type="protein sequence ID" value="AAI14649.1"/>
    <property type="molecule type" value="mRNA"/>
</dbReference>
<dbReference type="RefSeq" id="NP_001076949.1">
    <property type="nucleotide sequence ID" value="NM_001083480.2"/>
</dbReference>
<dbReference type="SMR" id="A4FUA8"/>
<dbReference type="CORUM" id="A4FUA8"/>
<dbReference type="FunCoup" id="A4FUA8">
    <property type="interactions" value="3875"/>
</dbReference>
<dbReference type="STRING" id="9913.ENSBTAP00000056906"/>
<dbReference type="PaxDb" id="9913-ENSBTAP00000042551"/>
<dbReference type="PeptideAtlas" id="A4FUA8"/>
<dbReference type="Ensembl" id="ENSBTAT00000045136.3">
    <property type="protein sequence ID" value="ENSBTAP00000042551.2"/>
    <property type="gene ID" value="ENSBTAG00000014295.7"/>
</dbReference>
<dbReference type="GeneID" id="534656"/>
<dbReference type="KEGG" id="bta:534656"/>
<dbReference type="CTD" id="829"/>
<dbReference type="VEuPathDB" id="HostDB:ENSBTAG00000014295"/>
<dbReference type="VGNC" id="VGNC:26756">
    <property type="gene designation" value="CAPZA1"/>
</dbReference>
<dbReference type="eggNOG" id="KOG0836">
    <property type="taxonomic scope" value="Eukaryota"/>
</dbReference>
<dbReference type="GeneTree" id="ENSGT00950000183119"/>
<dbReference type="HOGENOM" id="CLU_045161_0_0_1"/>
<dbReference type="InParanoid" id="A4FUA8"/>
<dbReference type="OMA" id="QEHFPNA"/>
<dbReference type="OrthoDB" id="340550at2759"/>
<dbReference type="TreeFam" id="TF314822"/>
<dbReference type="Reactome" id="R-BTA-2132295">
    <property type="pathway name" value="MHC class II antigen presentation"/>
</dbReference>
<dbReference type="Reactome" id="R-BTA-3371497">
    <property type="pathway name" value="HSP90 chaperone cycle for steroid hormone receptors (SHR) in the presence of ligand"/>
</dbReference>
<dbReference type="Reactome" id="R-BTA-6807878">
    <property type="pathway name" value="COPI-mediated anterograde transport"/>
</dbReference>
<dbReference type="Reactome" id="R-BTA-6811436">
    <property type="pathway name" value="COPI-independent Golgi-to-ER retrograde traffic"/>
</dbReference>
<dbReference type="Reactome" id="R-BTA-879415">
    <property type="pathway name" value="Advanced glycosylation endproduct receptor signaling"/>
</dbReference>
<dbReference type="Reactome" id="R-BTA-983231">
    <property type="pathway name" value="Factors involved in megakaryocyte development and platelet production"/>
</dbReference>
<dbReference type="Proteomes" id="UP000009136">
    <property type="component" value="Chromosome 3"/>
</dbReference>
<dbReference type="Bgee" id="ENSBTAG00000014295">
    <property type="expression patterns" value="Expressed in abdominal lymph node and 105 other cell types or tissues"/>
</dbReference>
<dbReference type="GO" id="GO:0030863">
    <property type="term" value="C:cortical cytoskeleton"/>
    <property type="evidence" value="ECO:0000318"/>
    <property type="project" value="GO_Central"/>
</dbReference>
<dbReference type="GO" id="GO:0008290">
    <property type="term" value="C:F-actin capping protein complex"/>
    <property type="evidence" value="ECO:0000318"/>
    <property type="project" value="GO_Central"/>
</dbReference>
<dbReference type="GO" id="GO:0071203">
    <property type="term" value="C:WASH complex"/>
    <property type="evidence" value="ECO:0000250"/>
    <property type="project" value="UniProtKB"/>
</dbReference>
<dbReference type="GO" id="GO:0051015">
    <property type="term" value="F:actin filament binding"/>
    <property type="evidence" value="ECO:0000318"/>
    <property type="project" value="GO_Central"/>
</dbReference>
<dbReference type="GO" id="GO:0030036">
    <property type="term" value="P:actin cytoskeleton organization"/>
    <property type="evidence" value="ECO:0000318"/>
    <property type="project" value="GO_Central"/>
</dbReference>
<dbReference type="GO" id="GO:0051016">
    <property type="term" value="P:barbed-end actin filament capping"/>
    <property type="evidence" value="ECO:0000318"/>
    <property type="project" value="GO_Central"/>
</dbReference>
<dbReference type="GO" id="GO:0034329">
    <property type="term" value="P:cell junction assembly"/>
    <property type="evidence" value="ECO:0000250"/>
    <property type="project" value="UniProtKB"/>
</dbReference>
<dbReference type="FunFam" id="3.30.1140.60:FF:000001">
    <property type="entry name" value="F-actin-capping protein subunit alpha"/>
    <property type="match status" value="1"/>
</dbReference>
<dbReference type="FunFam" id="3.90.1150.210:FF:000002">
    <property type="entry name" value="F-actin-capping protein subunit alpha"/>
    <property type="match status" value="1"/>
</dbReference>
<dbReference type="Gene3D" id="3.30.1140.60">
    <property type="entry name" value="F-actin capping protein, alpha subunit"/>
    <property type="match status" value="1"/>
</dbReference>
<dbReference type="Gene3D" id="3.90.1150.210">
    <property type="entry name" value="F-actin capping protein, beta subunit"/>
    <property type="match status" value="1"/>
</dbReference>
<dbReference type="InterPro" id="IPR002189">
    <property type="entry name" value="CapZ_alpha"/>
</dbReference>
<dbReference type="InterPro" id="IPR037282">
    <property type="entry name" value="CapZ_alpha/beta"/>
</dbReference>
<dbReference type="InterPro" id="IPR042276">
    <property type="entry name" value="CapZ_alpha/beta_2"/>
</dbReference>
<dbReference type="InterPro" id="IPR042489">
    <property type="entry name" value="CapZ_alpha_1"/>
</dbReference>
<dbReference type="InterPro" id="IPR017865">
    <property type="entry name" value="F-actin_cap_asu_CS"/>
</dbReference>
<dbReference type="PANTHER" id="PTHR10653">
    <property type="entry name" value="F-ACTIN-CAPPING PROTEIN SUBUNIT ALPHA"/>
    <property type="match status" value="1"/>
</dbReference>
<dbReference type="PANTHER" id="PTHR10653:SF5">
    <property type="entry name" value="F-ACTIN-CAPPING PROTEIN SUBUNIT ALPHA-1"/>
    <property type="match status" value="1"/>
</dbReference>
<dbReference type="Pfam" id="PF01267">
    <property type="entry name" value="F-actin_cap_A"/>
    <property type="match status" value="1"/>
</dbReference>
<dbReference type="PRINTS" id="PR00191">
    <property type="entry name" value="FACTINCAPA"/>
</dbReference>
<dbReference type="SUPFAM" id="SSF90096">
    <property type="entry name" value="Subunits of heterodimeric actin filament capping protein Capz"/>
    <property type="match status" value="1"/>
</dbReference>
<dbReference type="PROSITE" id="PS00748">
    <property type="entry name" value="F_ACTIN_CAPPING_A_1"/>
    <property type="match status" value="1"/>
</dbReference>
<dbReference type="PROSITE" id="PS00749">
    <property type="entry name" value="F_ACTIN_CAPPING_A_2"/>
    <property type="match status" value="1"/>
</dbReference>
<proteinExistence type="evidence at transcript level"/>
<comment type="function">
    <text evidence="2 3">F-actin-capping proteins bind in a Ca(2+)-independent manner to the fast growing ends of actin filaments (barbed end) thereby blocking the exchange of subunits at these ends. Unlike other capping proteins (such as gelsolin and severin), these proteins do not sever actin filaments. May play a role in the formation of epithelial cell junctions (By similarity). Forms, with CAPZB, the barbed end of the fast growing ends of actin filaments in the dynactin complex and stabilizes dynactin structure. The dynactin multiprotein complex activates the molecular motor dynein for ultra-processive transport along microtubules (By similarity).</text>
</comment>
<comment type="subunit">
    <text evidence="1 2 3">Component of the F-actin capping complex, composed of a heterodimer of an alpha and a beta subunit. Subunit of dynactin, a multiprotein complex part of a tripartite complex with dynein and a adapter, such as BICDL1, BICD2 or HOOK3. The dynactin complex is built around ACTR1A/ACTB filament and consists of an actin-related filament composed of a shoulder domain, a pointed end and a barbed end. Its length is defined by its flexible shoulder domain. The soulder is composed of 2 DCTN1 subunits, 4 DCTN2 and 2 DCTN3. The 4 DCNT2 (via N-terminus) bind the ACTR1A filament and act as molecular rulers to determine the length. The pointed end is important for binding dynein-dynactin cargo adapters. Consists of 4 subunits: ACTR10, DCNT4, DCTN5 and DCTN6. The barbed end is composed of a CAPZA1:CAPZB heterodimers, which binds ACTR1A/ACTB filament and dynactin and stabilizes dynactin (By similarity). Component of the WASH complex, composed of F-actin-capping protein subunit alpha (CAPZA1, CAPZA2 or CAPZA3), F-actin-capping protein subunit beta (CAPZB), WASH (WASHC1, WASH2P, WASH3P, WASH4P, WASH5P or WASH6P), WASHC2 (WASHC2A or WASHC2C), WASHC3, WASHC4 and WASHC5. Interacts with S100A (By similarity). Interacts with S100B. Interacts with SH3BP1; recruits CAPZA1 to forming cell junctions. Interacts with CD2AP. Directly interacts with CRACD; this interaction decreases binding to actin (By similarity).</text>
</comment>
<comment type="subcellular location">
    <subcellularLocation>
        <location evidence="2">Cytoplasm</location>
        <location evidence="2">Cytoskeleton</location>
    </subcellularLocation>
</comment>
<comment type="similarity">
    <text evidence="4">Belongs to the F-actin-capping protein alpha subunit family.</text>
</comment>
<reference key="1">
    <citation type="journal article" date="2005" name="BMC Genomics">
        <title>Characterization of 954 bovine full-CDS cDNA sequences.</title>
        <authorList>
            <person name="Harhay G.P."/>
            <person name="Sonstegard T.S."/>
            <person name="Keele J.W."/>
            <person name="Heaton M.P."/>
            <person name="Clawson M.L."/>
            <person name="Snelling W.M."/>
            <person name="Wiedmann R.T."/>
            <person name="Van Tassell C.P."/>
            <person name="Smith T.P.L."/>
        </authorList>
    </citation>
    <scope>NUCLEOTIDE SEQUENCE [LARGE SCALE MRNA]</scope>
</reference>
<reference key="2">
    <citation type="submission" date="2006-04" db="EMBL/GenBank/DDBJ databases">
        <authorList>
            <consortium name="NIH - Mammalian Gene Collection (MGC) project"/>
        </authorList>
    </citation>
    <scope>NUCLEOTIDE SEQUENCE [LARGE SCALE MRNA]</scope>
    <source>
        <strain>Hereford</strain>
        <tissue>Uterus</tissue>
    </source>
</reference>
<feature type="initiator methionine" description="Removed" evidence="3">
    <location>
        <position position="1"/>
    </location>
</feature>
<feature type="chain" id="PRO_0000355563" description="F-actin-capping protein subunit alpha-1">
    <location>
        <begin position="2"/>
        <end position="286"/>
    </location>
</feature>
<feature type="modified residue" description="N-acetylalanine" evidence="3">
    <location>
        <position position="2"/>
    </location>
</feature>
<feature type="modified residue" description="Phosphoserine" evidence="3">
    <location>
        <position position="9"/>
    </location>
</feature>
<feature type="modified residue" description="N6-acetyllysine" evidence="3">
    <location>
        <position position="19"/>
    </location>
</feature>
<feature type="modified residue" description="N6-acetyllysine" evidence="3">
    <location>
        <position position="97"/>
    </location>
</feature>
<protein>
    <recommendedName>
        <fullName>F-actin-capping protein subunit alpha-1</fullName>
    </recommendedName>
    <alternativeName>
        <fullName>CapZ alpha-1</fullName>
    </alternativeName>
</protein>
<organism>
    <name type="scientific">Bos taurus</name>
    <name type="common">Bovine</name>
    <dbReference type="NCBI Taxonomy" id="9913"/>
    <lineage>
        <taxon>Eukaryota</taxon>
        <taxon>Metazoa</taxon>
        <taxon>Chordata</taxon>
        <taxon>Craniata</taxon>
        <taxon>Vertebrata</taxon>
        <taxon>Euteleostomi</taxon>
        <taxon>Mammalia</taxon>
        <taxon>Eutheria</taxon>
        <taxon>Laurasiatheria</taxon>
        <taxon>Artiodactyla</taxon>
        <taxon>Ruminantia</taxon>
        <taxon>Pecora</taxon>
        <taxon>Bovidae</taxon>
        <taxon>Bovinae</taxon>
        <taxon>Bos</taxon>
    </lineage>
</organism>
<evidence type="ECO:0000250" key="1"/>
<evidence type="ECO:0000250" key="2">
    <source>
        <dbReference type="UniProtKB" id="A0PFK5"/>
    </source>
</evidence>
<evidence type="ECO:0000250" key="3">
    <source>
        <dbReference type="UniProtKB" id="P52907"/>
    </source>
</evidence>
<evidence type="ECO:0000305" key="4"/>
<gene>
    <name type="primary">CAPZA1</name>
</gene>
<accession>A4FUA8</accession>
<sequence length="286" mass="32932">MADFEDRVSDEEKVRIAAKFITHAPPGEFNEVFNDVRLLLNNDNLLREGAAHAFAQYNMDQFTPVKIEGYEDQVLITEHGDLGNSRFLDPRNKISFKFDHLRKEASDPQPEEADGGLKSWRESCDSALRAYVKDHYSNGFCTVYAKTIDGQQTIIACIESHQFQPKNFWNGRWRSEWKFTITPPTAQVVGVLKIQVHYYEDGNVQLVSHKDVQDSVTVSNEAQTAKEFIKIIEHAENEYQTAISENYQTMSDTTFKALRRQLPVTRTKVDWNKILSYKIGKEMQNA</sequence>
<keyword id="KW-0007">Acetylation</keyword>
<keyword id="KW-0117">Actin capping</keyword>
<keyword id="KW-0009">Actin-binding</keyword>
<keyword id="KW-0963">Cytoplasm</keyword>
<keyword id="KW-0206">Cytoskeleton</keyword>
<keyword id="KW-0597">Phosphoprotein</keyword>
<keyword id="KW-1185">Reference proteome</keyword>
<name>CAZA1_BOVIN</name>